<keyword id="KW-0687">Ribonucleoprotein</keyword>
<keyword id="KW-0689">Ribosomal protein</keyword>
<keyword id="KW-0694">RNA-binding</keyword>
<keyword id="KW-0699">rRNA-binding</keyword>
<evidence type="ECO:0000255" key="1">
    <source>
        <dbReference type="HAMAP-Rule" id="MF_01310"/>
    </source>
</evidence>
<evidence type="ECO:0000305" key="2"/>
<reference key="1">
    <citation type="submission" date="2008-02" db="EMBL/GenBank/DDBJ databases">
        <title>Complete sequence of Haemophilus somnus 2336.</title>
        <authorList>
            <consortium name="US DOE Joint Genome Institute"/>
            <person name="Siddaramappa S."/>
            <person name="Duncan A.J."/>
            <person name="Challacombe J.F."/>
            <person name="Rainey D."/>
            <person name="Gillaspy A.F."/>
            <person name="Carson M."/>
            <person name="Gipson J."/>
            <person name="Gipson M."/>
            <person name="Bruce D."/>
            <person name="Detter J.C."/>
            <person name="Han C.S."/>
            <person name="Land M."/>
            <person name="Tapia R."/>
            <person name="Thompson L.S."/>
            <person name="Orvis J."/>
            <person name="Zaitshik J."/>
            <person name="Barnes G."/>
            <person name="Brettin T.S."/>
            <person name="Dyer D.W."/>
            <person name="Inzana T.J."/>
        </authorList>
    </citation>
    <scope>NUCLEOTIDE SEQUENCE [LARGE SCALE GENOMIC DNA]</scope>
    <source>
        <strain>2336</strain>
    </source>
</reference>
<organism>
    <name type="scientific">Histophilus somni (strain 2336)</name>
    <name type="common">Haemophilus somnus</name>
    <dbReference type="NCBI Taxonomy" id="228400"/>
    <lineage>
        <taxon>Bacteria</taxon>
        <taxon>Pseudomonadati</taxon>
        <taxon>Pseudomonadota</taxon>
        <taxon>Gammaproteobacteria</taxon>
        <taxon>Pasteurellales</taxon>
        <taxon>Pasteurellaceae</taxon>
        <taxon>Histophilus</taxon>
    </lineage>
</organism>
<gene>
    <name evidence="1" type="primary">rpsK</name>
    <name type="ordered locus">HSM_1976</name>
</gene>
<name>RS11_HISS2</name>
<proteinExistence type="inferred from homology"/>
<dbReference type="EMBL" id="CP000947">
    <property type="protein sequence ID" value="ACA31772.1"/>
    <property type="molecule type" value="Genomic_DNA"/>
</dbReference>
<dbReference type="RefSeq" id="WP_005701868.1">
    <property type="nucleotide sequence ID" value="NC_010519.1"/>
</dbReference>
<dbReference type="SMR" id="B0UX37"/>
<dbReference type="STRING" id="228400.HSM_1976"/>
<dbReference type="GeneID" id="77207049"/>
<dbReference type="KEGG" id="hsm:HSM_1976"/>
<dbReference type="HOGENOM" id="CLU_072439_5_0_6"/>
<dbReference type="GO" id="GO:1990904">
    <property type="term" value="C:ribonucleoprotein complex"/>
    <property type="evidence" value="ECO:0007669"/>
    <property type="project" value="UniProtKB-KW"/>
</dbReference>
<dbReference type="GO" id="GO:0005840">
    <property type="term" value="C:ribosome"/>
    <property type="evidence" value="ECO:0007669"/>
    <property type="project" value="UniProtKB-KW"/>
</dbReference>
<dbReference type="GO" id="GO:0019843">
    <property type="term" value="F:rRNA binding"/>
    <property type="evidence" value="ECO:0007669"/>
    <property type="project" value="UniProtKB-UniRule"/>
</dbReference>
<dbReference type="GO" id="GO:0003735">
    <property type="term" value="F:structural constituent of ribosome"/>
    <property type="evidence" value="ECO:0007669"/>
    <property type="project" value="InterPro"/>
</dbReference>
<dbReference type="GO" id="GO:0006412">
    <property type="term" value="P:translation"/>
    <property type="evidence" value="ECO:0007669"/>
    <property type="project" value="UniProtKB-UniRule"/>
</dbReference>
<dbReference type="FunFam" id="3.30.420.80:FF:000001">
    <property type="entry name" value="30S ribosomal protein S11"/>
    <property type="match status" value="1"/>
</dbReference>
<dbReference type="Gene3D" id="3.30.420.80">
    <property type="entry name" value="Ribosomal protein S11"/>
    <property type="match status" value="1"/>
</dbReference>
<dbReference type="HAMAP" id="MF_01310">
    <property type="entry name" value="Ribosomal_uS11"/>
    <property type="match status" value="1"/>
</dbReference>
<dbReference type="InterPro" id="IPR001971">
    <property type="entry name" value="Ribosomal_uS11"/>
</dbReference>
<dbReference type="InterPro" id="IPR019981">
    <property type="entry name" value="Ribosomal_uS11_bac-type"/>
</dbReference>
<dbReference type="InterPro" id="IPR018102">
    <property type="entry name" value="Ribosomal_uS11_CS"/>
</dbReference>
<dbReference type="InterPro" id="IPR036967">
    <property type="entry name" value="Ribosomal_uS11_sf"/>
</dbReference>
<dbReference type="NCBIfam" id="NF003698">
    <property type="entry name" value="PRK05309.1"/>
    <property type="match status" value="1"/>
</dbReference>
<dbReference type="NCBIfam" id="TIGR03632">
    <property type="entry name" value="uS11_bact"/>
    <property type="match status" value="1"/>
</dbReference>
<dbReference type="PANTHER" id="PTHR11759">
    <property type="entry name" value="40S RIBOSOMAL PROTEIN S14/30S RIBOSOMAL PROTEIN S11"/>
    <property type="match status" value="1"/>
</dbReference>
<dbReference type="Pfam" id="PF00411">
    <property type="entry name" value="Ribosomal_S11"/>
    <property type="match status" value="1"/>
</dbReference>
<dbReference type="PIRSF" id="PIRSF002131">
    <property type="entry name" value="Ribosomal_S11"/>
    <property type="match status" value="1"/>
</dbReference>
<dbReference type="SUPFAM" id="SSF53137">
    <property type="entry name" value="Translational machinery components"/>
    <property type="match status" value="1"/>
</dbReference>
<dbReference type="PROSITE" id="PS00054">
    <property type="entry name" value="RIBOSOMAL_S11"/>
    <property type="match status" value="1"/>
</dbReference>
<sequence>MAKTPVRARKRVKKQVVDGVAHIHASFNNTIVTITDRQGNALAWATAGGSGFRGSRKSTPFAAQVAAERCAEVVKEFGLKNLEVMVKGPGPGRESTIRALNAAGFRITNITDVTPIPHNGCRPPKKRRV</sequence>
<protein>
    <recommendedName>
        <fullName evidence="1">Small ribosomal subunit protein uS11</fullName>
    </recommendedName>
    <alternativeName>
        <fullName evidence="2">30S ribosomal protein S11</fullName>
    </alternativeName>
</protein>
<comment type="function">
    <text evidence="1">Located on the platform of the 30S subunit, it bridges several disparate RNA helices of the 16S rRNA. Forms part of the Shine-Dalgarno cleft in the 70S ribosome.</text>
</comment>
<comment type="subunit">
    <text evidence="1">Part of the 30S ribosomal subunit. Interacts with proteins S7 and S18. Binds to IF-3.</text>
</comment>
<comment type="similarity">
    <text evidence="1">Belongs to the universal ribosomal protein uS11 family.</text>
</comment>
<accession>B0UX37</accession>
<feature type="chain" id="PRO_1000086193" description="Small ribosomal subunit protein uS11">
    <location>
        <begin position="1"/>
        <end position="129"/>
    </location>
</feature>